<reference key="1">
    <citation type="journal article" date="2003" name="Genome Res.">
        <title>Genome sequence of an M3 strain of Streptococcus pyogenes reveals a large-scale genomic rearrangement in invasive strains and new insights into phage evolution.</title>
        <authorList>
            <person name="Nakagawa I."/>
            <person name="Kurokawa K."/>
            <person name="Yamashita A."/>
            <person name="Nakata M."/>
            <person name="Tomiyasu Y."/>
            <person name="Okahashi N."/>
            <person name="Kawabata S."/>
            <person name="Yamazaki K."/>
            <person name="Shiba T."/>
            <person name="Yasunaga T."/>
            <person name="Hayashi H."/>
            <person name="Hattori M."/>
            <person name="Hamada S."/>
        </authorList>
    </citation>
    <scope>NUCLEOTIDE SEQUENCE [LARGE SCALE GENOMIC DNA]</scope>
    <source>
        <strain>SSI-1</strain>
    </source>
</reference>
<organism>
    <name type="scientific">Streptococcus pyogenes serotype M3 (strain SSI-1)</name>
    <dbReference type="NCBI Taxonomy" id="193567"/>
    <lineage>
        <taxon>Bacteria</taxon>
        <taxon>Bacillati</taxon>
        <taxon>Bacillota</taxon>
        <taxon>Bacilli</taxon>
        <taxon>Lactobacillales</taxon>
        <taxon>Streptococcaceae</taxon>
        <taxon>Streptococcus</taxon>
    </lineage>
</organism>
<gene>
    <name type="primary">sodA</name>
    <name type="synonym">sodM</name>
    <name type="ordered locus">SPs0792</name>
</gene>
<protein>
    <recommendedName>
        <fullName>Superoxide dismutase [Mn]</fullName>
        <ecNumber>1.15.1.1</ecNumber>
    </recommendedName>
</protein>
<evidence type="ECO:0000250" key="1"/>
<evidence type="ECO:0000305" key="2"/>
<proteinExistence type="inferred from homology"/>
<accession>P0DF73</accession>
<accession>Q8K6Y8</accession>
<comment type="function">
    <text>Destroys superoxide anion radicals which are normally produced within the cells and which are toxic to biological systems.</text>
</comment>
<comment type="catalytic activity">
    <reaction>
        <text>2 superoxide + 2 H(+) = H2O2 + O2</text>
        <dbReference type="Rhea" id="RHEA:20696"/>
        <dbReference type="ChEBI" id="CHEBI:15378"/>
        <dbReference type="ChEBI" id="CHEBI:15379"/>
        <dbReference type="ChEBI" id="CHEBI:16240"/>
        <dbReference type="ChEBI" id="CHEBI:18421"/>
        <dbReference type="EC" id="1.15.1.1"/>
    </reaction>
</comment>
<comment type="cofactor">
    <cofactor evidence="1">
        <name>Mn(2+)</name>
        <dbReference type="ChEBI" id="CHEBI:29035"/>
    </cofactor>
    <text evidence="1">Binds 1 Mn(2+) ion per subunit.</text>
</comment>
<comment type="subunit">
    <text evidence="1">Homodimer.</text>
</comment>
<comment type="subcellular location">
    <subcellularLocation>
        <location evidence="1">Secreted</location>
    </subcellularLocation>
</comment>
<comment type="similarity">
    <text evidence="2">Belongs to the iron/manganese superoxide dismutase family.</text>
</comment>
<comment type="caution">
    <text evidence="2">Although found extracellularly, no signal sequence is present. An alternative secretory pathway may be used.</text>
</comment>
<feature type="initiator methionine" description="Removed" evidence="1">
    <location>
        <position position="1"/>
    </location>
</feature>
<feature type="chain" id="PRO_0000411576" description="Superoxide dismutase [Mn]">
    <location>
        <begin position="2"/>
        <end position="201"/>
    </location>
</feature>
<feature type="binding site" evidence="1">
    <location>
        <position position="27"/>
    </location>
    <ligand>
        <name>Mn(2+)</name>
        <dbReference type="ChEBI" id="CHEBI:29035"/>
    </ligand>
</feature>
<feature type="binding site" evidence="1">
    <location>
        <position position="81"/>
    </location>
    <ligand>
        <name>Mn(2+)</name>
        <dbReference type="ChEBI" id="CHEBI:29035"/>
    </ligand>
</feature>
<feature type="binding site" evidence="1">
    <location>
        <position position="163"/>
    </location>
    <ligand>
        <name>Mn(2+)</name>
        <dbReference type="ChEBI" id="CHEBI:29035"/>
    </ligand>
</feature>
<feature type="binding site" evidence="1">
    <location>
        <position position="167"/>
    </location>
    <ligand>
        <name>Mn(2+)</name>
        <dbReference type="ChEBI" id="CHEBI:29035"/>
    </ligand>
</feature>
<dbReference type="EC" id="1.15.1.1"/>
<dbReference type="EMBL" id="BA000034">
    <property type="protein sequence ID" value="BAC63887.1"/>
    <property type="molecule type" value="Genomic_DNA"/>
</dbReference>
<dbReference type="RefSeq" id="WP_011054658.1">
    <property type="nucleotide sequence ID" value="NC_004606.1"/>
</dbReference>
<dbReference type="SMR" id="P0DF73"/>
<dbReference type="KEGG" id="sps:SPs0792"/>
<dbReference type="HOGENOM" id="CLU_031625_0_1_9"/>
<dbReference type="GO" id="GO:0005737">
    <property type="term" value="C:cytoplasm"/>
    <property type="evidence" value="ECO:0007669"/>
    <property type="project" value="TreeGrafter"/>
</dbReference>
<dbReference type="GO" id="GO:0005576">
    <property type="term" value="C:extracellular region"/>
    <property type="evidence" value="ECO:0007669"/>
    <property type="project" value="UniProtKB-SubCell"/>
</dbReference>
<dbReference type="GO" id="GO:0046872">
    <property type="term" value="F:metal ion binding"/>
    <property type="evidence" value="ECO:0007669"/>
    <property type="project" value="UniProtKB-KW"/>
</dbReference>
<dbReference type="GO" id="GO:0004784">
    <property type="term" value="F:superoxide dismutase activity"/>
    <property type="evidence" value="ECO:0007669"/>
    <property type="project" value="UniProtKB-EC"/>
</dbReference>
<dbReference type="FunFam" id="1.10.287.990:FF:000001">
    <property type="entry name" value="Superoxide dismutase"/>
    <property type="match status" value="1"/>
</dbReference>
<dbReference type="FunFam" id="3.55.40.20:FF:000001">
    <property type="entry name" value="Superoxide dismutase"/>
    <property type="match status" value="1"/>
</dbReference>
<dbReference type="Gene3D" id="1.10.287.990">
    <property type="entry name" value="Fe,Mn superoxide dismutase (SOD) domain"/>
    <property type="match status" value="1"/>
</dbReference>
<dbReference type="Gene3D" id="3.55.40.20">
    <property type="entry name" value="Iron/manganese superoxide dismutase, C-terminal domain"/>
    <property type="match status" value="1"/>
</dbReference>
<dbReference type="InterPro" id="IPR001189">
    <property type="entry name" value="Mn/Fe_SOD"/>
</dbReference>
<dbReference type="InterPro" id="IPR019833">
    <property type="entry name" value="Mn/Fe_SOD_BS"/>
</dbReference>
<dbReference type="InterPro" id="IPR019832">
    <property type="entry name" value="Mn/Fe_SOD_C"/>
</dbReference>
<dbReference type="InterPro" id="IPR019831">
    <property type="entry name" value="Mn/Fe_SOD_N"/>
</dbReference>
<dbReference type="InterPro" id="IPR036324">
    <property type="entry name" value="Mn/Fe_SOD_N_sf"/>
</dbReference>
<dbReference type="InterPro" id="IPR036314">
    <property type="entry name" value="SOD_C_sf"/>
</dbReference>
<dbReference type="PANTHER" id="PTHR43595">
    <property type="entry name" value="37S RIBOSOMAL PROTEIN S26, MITOCHONDRIAL"/>
    <property type="match status" value="1"/>
</dbReference>
<dbReference type="PANTHER" id="PTHR43595:SF2">
    <property type="entry name" value="SMALL RIBOSOMAL SUBUNIT PROTEIN MS42"/>
    <property type="match status" value="1"/>
</dbReference>
<dbReference type="Pfam" id="PF02777">
    <property type="entry name" value="Sod_Fe_C"/>
    <property type="match status" value="1"/>
</dbReference>
<dbReference type="Pfam" id="PF00081">
    <property type="entry name" value="Sod_Fe_N"/>
    <property type="match status" value="1"/>
</dbReference>
<dbReference type="PIRSF" id="PIRSF000349">
    <property type="entry name" value="SODismutase"/>
    <property type="match status" value="1"/>
</dbReference>
<dbReference type="PRINTS" id="PR01703">
    <property type="entry name" value="MNSODISMTASE"/>
</dbReference>
<dbReference type="SUPFAM" id="SSF54719">
    <property type="entry name" value="Fe,Mn superoxide dismutase (SOD), C-terminal domain"/>
    <property type="match status" value="1"/>
</dbReference>
<dbReference type="SUPFAM" id="SSF46609">
    <property type="entry name" value="Fe,Mn superoxide dismutase (SOD), N-terminal domain"/>
    <property type="match status" value="1"/>
</dbReference>
<dbReference type="PROSITE" id="PS00088">
    <property type="entry name" value="SOD_MN"/>
    <property type="match status" value="1"/>
</dbReference>
<sequence length="201" mass="22657">MAIILPELPYAYDALEPQFDAETMTLHHDKHHATYVANTNAALEKHPEIGENLEELLADVTKIPEDIRQALINNGGGHLNHALFWELLSPEKQDVTSDVAQAIDDAFGSFDAFKEQFTAAATGRFGSGWAWLVVNKEGQLEITSTANQDTPISEGKKPILALDVWEHAYYLNYRNVRPNYIKAFFEIINWKKVSELYQAAK</sequence>
<name>SODM_STRPQ</name>
<keyword id="KW-0464">Manganese</keyword>
<keyword id="KW-0479">Metal-binding</keyword>
<keyword id="KW-0560">Oxidoreductase</keyword>
<keyword id="KW-0964">Secreted</keyword>